<dbReference type="EMBL" id="AY037931">
    <property type="protein sequence ID" value="AAK67493.1"/>
    <property type="molecule type" value="mRNA"/>
</dbReference>
<dbReference type="SMR" id="Q8BB47"/>
<dbReference type="GO" id="GO:0042025">
    <property type="term" value="C:host cell nucleus"/>
    <property type="evidence" value="ECO:0007669"/>
    <property type="project" value="UniProtKB-SubCell"/>
</dbReference>
<dbReference type="GO" id="GO:0003677">
    <property type="term" value="F:DNA binding"/>
    <property type="evidence" value="ECO:0007669"/>
    <property type="project" value="UniProtKB-KW"/>
</dbReference>
<dbReference type="GO" id="GO:0006355">
    <property type="term" value="P:regulation of DNA-templated transcription"/>
    <property type="evidence" value="ECO:0007669"/>
    <property type="project" value="InterPro"/>
</dbReference>
<dbReference type="InterPro" id="IPR005028">
    <property type="entry name" value="Herpes_IE2_3"/>
</dbReference>
<dbReference type="InterPro" id="IPR005507">
    <property type="entry name" value="HHV6-IE"/>
</dbReference>
<dbReference type="Pfam" id="PF03361">
    <property type="entry name" value="Herpes_IE2_3"/>
    <property type="match status" value="1"/>
</dbReference>
<dbReference type="Pfam" id="PF03753">
    <property type="entry name" value="HHV6-IE"/>
    <property type="match status" value="1"/>
</dbReference>
<gene>
    <name type="primary">U90/U86</name>
</gene>
<organismHost>
    <name type="scientific">Homo sapiens</name>
    <name type="common">Human</name>
    <dbReference type="NCBI Taxonomy" id="9606"/>
</organismHost>
<comment type="function">
    <text evidence="2">Transcriptional transactivator.</text>
</comment>
<comment type="subunit">
    <text evidence="3">Interacts with human UBE2I in the nucleus. Although this interaction does not promote IE2 sumoylation, it represses transactivation activity.</text>
</comment>
<comment type="subcellular location">
    <subcellularLocation>
        <location evidence="3">Host nucleus</location>
    </subcellularLocation>
</comment>
<comment type="similarity">
    <text evidence="4">Belongs to the herpesviridae IE2 family.</text>
</comment>
<protein>
    <recommendedName>
        <fullName>Immediate-early protein 2</fullName>
        <shortName>IE2</shortName>
    </recommendedName>
</protein>
<reference key="1">
    <citation type="journal article" date="2003" name="Virology">
        <title>Characterization of the immediate-early 2 protein of human herpesvirus 6, a promiscuous transcriptional activator.</title>
        <authorList>
            <person name="Gravel A."/>
            <person name="Tomoiu A."/>
            <person name="Cloutier N."/>
            <person name="Gosselin J."/>
            <person name="Flamand L."/>
        </authorList>
    </citation>
    <scope>NUCLEOTIDE SEQUENCE [MRNA]</scope>
</reference>
<reference key="2">
    <citation type="journal article" date="2006" name="Virology">
        <title>Mapping of human herpesvirus 6 immediate-early 2 protein transactivation domains.</title>
        <authorList>
            <person name="Tomoiu A."/>
            <person name="Gravel A."/>
            <person name="Flamand L."/>
        </authorList>
    </citation>
    <scope>FUNCTION</scope>
</reference>
<reference key="3">
    <citation type="journal article" date="2006" name="J. Virol.">
        <title>Functional interaction between human herpesvirus 6 immediate-early 2 protein and ubiquitin-conjugating enzyme 9 in the absence of sumoylation.</title>
        <authorList>
            <person name="Tomoiu A."/>
            <person name="Gravel A."/>
            <person name="Tanguay R.M."/>
            <person name="Flamand L."/>
        </authorList>
    </citation>
    <scope>INTERACTION WITH UBE2I</scope>
    <scope>SUBCELLULAR LOCATION</scope>
</reference>
<keyword id="KW-0010">Activator</keyword>
<keyword id="KW-0238">DNA-binding</keyword>
<keyword id="KW-1048">Host nucleus</keyword>
<keyword id="KW-0945">Host-virus interaction</keyword>
<keyword id="KW-0677">Repeat</keyword>
<keyword id="KW-0804">Transcription</keyword>
<keyword id="KW-0805">Transcription regulation</keyword>
<feature type="chain" id="PRO_0000260223" description="Immediate-early protein 2">
    <location>
        <begin position="1"/>
        <end position="1466"/>
    </location>
</feature>
<feature type="region of interest" description="Disordered" evidence="1">
    <location>
        <begin position="1"/>
        <end position="21"/>
    </location>
</feature>
<feature type="region of interest" description="Disordered" evidence="1">
    <location>
        <begin position="223"/>
        <end position="242"/>
    </location>
</feature>
<feature type="region of interest" description="Disordered" evidence="1">
    <location>
        <begin position="339"/>
        <end position="370"/>
    </location>
</feature>
<feature type="region of interest" description="Disordered" evidence="1">
    <location>
        <begin position="428"/>
        <end position="472"/>
    </location>
</feature>
<feature type="region of interest" description="Disordered" evidence="1">
    <location>
        <begin position="517"/>
        <end position="965"/>
    </location>
</feature>
<feature type="region of interest" description="Interaction with human UBE2I">
    <location>
        <begin position="989"/>
        <end position="1037"/>
    </location>
</feature>
<feature type="region of interest" description="Disordered" evidence="1">
    <location>
        <begin position="1005"/>
        <end position="1068"/>
    </location>
</feature>
<feature type="region of interest" description="Disordered" evidence="1">
    <location>
        <begin position="1086"/>
        <end position="1179"/>
    </location>
</feature>
<feature type="region of interest" description="Disordered" evidence="1">
    <location>
        <begin position="1191"/>
        <end position="1223"/>
    </location>
</feature>
<feature type="compositionally biased region" description="Polar residues" evidence="1">
    <location>
        <begin position="339"/>
        <end position="350"/>
    </location>
</feature>
<feature type="compositionally biased region" description="Basic residues" evidence="1">
    <location>
        <begin position="428"/>
        <end position="437"/>
    </location>
</feature>
<feature type="compositionally biased region" description="Basic and acidic residues" evidence="1">
    <location>
        <begin position="443"/>
        <end position="472"/>
    </location>
</feature>
<feature type="compositionally biased region" description="Basic and acidic residues" evidence="1">
    <location>
        <begin position="536"/>
        <end position="553"/>
    </location>
</feature>
<feature type="compositionally biased region" description="Polar residues" evidence="1">
    <location>
        <begin position="583"/>
        <end position="595"/>
    </location>
</feature>
<feature type="compositionally biased region" description="Polar residues" evidence="1">
    <location>
        <begin position="640"/>
        <end position="665"/>
    </location>
</feature>
<feature type="compositionally biased region" description="Low complexity" evidence="1">
    <location>
        <begin position="666"/>
        <end position="681"/>
    </location>
</feature>
<feature type="compositionally biased region" description="Basic and acidic residues" evidence="1">
    <location>
        <begin position="696"/>
        <end position="713"/>
    </location>
</feature>
<feature type="compositionally biased region" description="Low complexity" evidence="1">
    <location>
        <begin position="720"/>
        <end position="756"/>
    </location>
</feature>
<feature type="compositionally biased region" description="Low complexity" evidence="1">
    <location>
        <begin position="763"/>
        <end position="772"/>
    </location>
</feature>
<feature type="compositionally biased region" description="Basic and acidic residues" evidence="1">
    <location>
        <begin position="773"/>
        <end position="790"/>
    </location>
</feature>
<feature type="compositionally biased region" description="Low complexity" evidence="1">
    <location>
        <begin position="791"/>
        <end position="800"/>
    </location>
</feature>
<feature type="compositionally biased region" description="Basic and acidic residues" evidence="1">
    <location>
        <begin position="801"/>
        <end position="814"/>
    </location>
</feature>
<feature type="compositionally biased region" description="Low complexity" evidence="1">
    <location>
        <begin position="826"/>
        <end position="884"/>
    </location>
</feature>
<feature type="compositionally biased region" description="Low complexity" evidence="1">
    <location>
        <begin position="926"/>
        <end position="940"/>
    </location>
</feature>
<feature type="compositionally biased region" description="Polar residues" evidence="1">
    <location>
        <begin position="955"/>
        <end position="965"/>
    </location>
</feature>
<feature type="compositionally biased region" description="Low complexity" evidence="1">
    <location>
        <begin position="1019"/>
        <end position="1029"/>
    </location>
</feature>
<feature type="compositionally biased region" description="Low complexity" evidence="1">
    <location>
        <begin position="1053"/>
        <end position="1068"/>
    </location>
</feature>
<feature type="compositionally biased region" description="Low complexity" evidence="1">
    <location>
        <begin position="1086"/>
        <end position="1110"/>
    </location>
</feature>
<feature type="compositionally biased region" description="Basic and acidic residues" evidence="1">
    <location>
        <begin position="1116"/>
        <end position="1131"/>
    </location>
</feature>
<feature type="compositionally biased region" description="Polar residues" evidence="1">
    <location>
        <begin position="1162"/>
        <end position="1177"/>
    </location>
</feature>
<feature type="compositionally biased region" description="Basic residues" evidence="1">
    <location>
        <begin position="1195"/>
        <end position="1213"/>
    </location>
</feature>
<proteinExistence type="evidence at protein level"/>
<name>IE2_HHV6G</name>
<sequence>MEPAKPSGNNMGSNDERMQDYRPDPMMEESIQQILEDSLMCDTSFDDLILPGLESFGLIIPESSNNIESNNVEEGSNEDLKTLAEHKCKQGNDNDVIQSAMKLSGLYCDADITHTQPLSDNTHQDPIYSQETRIFSKTIQDPRIAAQTHRQCTSSASNLPSNESGSTQVRFASELPNQLLQPMYTSHNQNANLQNNFTSLPYQPYHDPYRDIESSYRESRNTNRGYDYNFRHHSYRPRGGNGKYNYYNPNSKYQQPYKRCFTRTYNRRGRGHRSYDCSDRSADLPYEHYTYPNYEQQNPDPRMNNYKDFTQLTNKFNFGANDYSMAFSTDSTHVQSDNYNHPTKAQTIPETTKTKKHKATKDNETSRGNQVLTSNDAISLSYRPSPIKLDIIKKIYDTDVIPLPKEALTANGSNRDVDIQKYKKAHIRCRSVQKKKERSSQTNKHDENHASSRSDLKERKSNEHEDKAVTKARDFSKLDPLLSPLPLTPEPAIDFADHTDKFYSTPEFNQIKQNLHRSKTSLQDTVPISKHTPRAPTKDNSYKKHHDSKDNYPKMKHSPGRTTSKKNTTNSNGHQNFKDVSVKNVSGKATSTSPKSKTHHYSSSSDEEGQYKSPVKTITPSPSPYCKLKNPSIMDKNSAKNHTASADKNLTDNSPIRSNLNPTAFNKSNNNKSITNSTSNSDECTDKKPNCNSTKNESKDPNRTCGKNSDKHLSKSCTMASKRAPSRASSRTSSRASSRASSRASSRASSRASSRASSRDSSRASSRAPSRASSRDSSRASSRDSSRDSNRASSKASSRASSRDSSRASSRDSSRASSKASRKASSRASSRASSRASSKASGKASSKASSRASSRAFSRNSSRASSRASSRASSRASSRASSRASSRDSSRALSRAFGRDSSRASSRASSRDSSRASSKASRKASSRASSRASSRASSRASSRELRQIYCDSNKRQTPPHDTSINTKFEISEIKFRCGEDLNFYKNTAARLQCFNHNDQFYNPRFRPHIRTNRKKSESTNDTDSESSMSRCKSHCRNSPDSLTIVRRKKHKSGSSSISSSIEENCRSNSHIVTGKEKFTPFYYQSSRTRSSSSSSSSSSASLSCSKSTLKTCRKTQNRDNKQIKSKSDSKHKTTNMSSDYESNRHADVFRNSPEAGEKFPLHNSSPFNTHEQSNHSENAIDEEQKKAPNITTSHLHQKQNVKLHNTKKCKKKRPRDDDSDSSIKNFCKKRISGAQKTESEVSEIDDLCYRDYVRLKERKVSEKFKIHRGRVATKDFQKLFRNTMRAFEYKQIPKKPCNDKNLKEAVYNICCNGLSNNAAIIMYFTRSKKVAQNIKIMQKELMIRPNITVSEAFKMNHAPPKYYDKDEIKRFIQLQKQGPQELWDKFENNTTHDLFTRHSDVKTMIIYAATPIDFVGAVKTCNKYAKDNPKEIVLRVCSIIDGDNPISIYNPISKDFKSKFSTLSKC</sequence>
<evidence type="ECO:0000256" key="1">
    <source>
        <dbReference type="SAM" id="MobiDB-lite"/>
    </source>
</evidence>
<evidence type="ECO:0000269" key="2">
    <source>
    </source>
</evidence>
<evidence type="ECO:0000269" key="3">
    <source>
    </source>
</evidence>
<evidence type="ECO:0000305" key="4"/>
<organism>
    <name type="scientific">Human herpesvirus 6A (strain GS)</name>
    <name type="common">HHV-6 variant A</name>
    <name type="synonym">Human B lymphotropic virus</name>
    <dbReference type="NCBI Taxonomy" id="10369"/>
    <lineage>
        <taxon>Viruses</taxon>
        <taxon>Duplodnaviria</taxon>
        <taxon>Heunggongvirae</taxon>
        <taxon>Peploviricota</taxon>
        <taxon>Herviviricetes</taxon>
        <taxon>Herpesvirales</taxon>
        <taxon>Orthoherpesviridae</taxon>
        <taxon>Betaherpesvirinae</taxon>
        <taxon>Roseolovirus</taxon>
        <taxon>Roseolovirus humanbeta6a</taxon>
        <taxon>Human betaherpesvirus 6A</taxon>
    </lineage>
</organism>
<accession>Q8BB47</accession>